<gene>
    <name evidence="1" type="primary">rplT</name>
    <name type="ordered locus">Bcer98_3259</name>
</gene>
<accession>A7GTM0</accession>
<keyword id="KW-0687">Ribonucleoprotein</keyword>
<keyword id="KW-0689">Ribosomal protein</keyword>
<keyword id="KW-0694">RNA-binding</keyword>
<keyword id="KW-0699">rRNA-binding</keyword>
<protein>
    <recommendedName>
        <fullName evidence="1">Large ribosomal subunit protein bL20</fullName>
    </recommendedName>
    <alternativeName>
        <fullName evidence="2">50S ribosomal protein L20</fullName>
    </alternativeName>
</protein>
<proteinExistence type="inferred from homology"/>
<name>RL20_BACCN</name>
<feature type="chain" id="PRO_1000080057" description="Large ribosomal subunit protein bL20">
    <location>
        <begin position="1"/>
        <end position="118"/>
    </location>
</feature>
<comment type="function">
    <text evidence="1">Binds directly to 23S ribosomal RNA and is necessary for the in vitro assembly process of the 50S ribosomal subunit. It is not involved in the protein synthesizing functions of that subunit.</text>
</comment>
<comment type="similarity">
    <text evidence="1">Belongs to the bacterial ribosomal protein bL20 family.</text>
</comment>
<sequence length="118" mass="13662">MPRVKGGTVTRKRRKKMIKLAKGYYGSKHTLFKVANQQVMKSLLYAFRDRRQKKRDFRKLWITRINAAARMNGLSYSRLMHGLKLAGIEVNRKMLADLAVHDEKAFAELATVAKNNLK</sequence>
<organism>
    <name type="scientific">Bacillus cytotoxicus (strain DSM 22905 / CIP 110041 / 391-98 / NVH 391-98)</name>
    <dbReference type="NCBI Taxonomy" id="315749"/>
    <lineage>
        <taxon>Bacteria</taxon>
        <taxon>Bacillati</taxon>
        <taxon>Bacillota</taxon>
        <taxon>Bacilli</taxon>
        <taxon>Bacillales</taxon>
        <taxon>Bacillaceae</taxon>
        <taxon>Bacillus</taxon>
        <taxon>Bacillus cereus group</taxon>
    </lineage>
</organism>
<dbReference type="EMBL" id="CP000764">
    <property type="protein sequence ID" value="ABS23478.1"/>
    <property type="molecule type" value="Genomic_DNA"/>
</dbReference>
<dbReference type="RefSeq" id="WP_012095717.1">
    <property type="nucleotide sequence ID" value="NC_009674.1"/>
</dbReference>
<dbReference type="SMR" id="A7GTM0"/>
<dbReference type="STRING" id="315749.Bcer98_3259"/>
<dbReference type="GeneID" id="33898504"/>
<dbReference type="KEGG" id="bcy:Bcer98_3259"/>
<dbReference type="eggNOG" id="COG0292">
    <property type="taxonomic scope" value="Bacteria"/>
</dbReference>
<dbReference type="HOGENOM" id="CLU_123265_0_1_9"/>
<dbReference type="OrthoDB" id="9808966at2"/>
<dbReference type="Proteomes" id="UP000002300">
    <property type="component" value="Chromosome"/>
</dbReference>
<dbReference type="GO" id="GO:1990904">
    <property type="term" value="C:ribonucleoprotein complex"/>
    <property type="evidence" value="ECO:0007669"/>
    <property type="project" value="UniProtKB-KW"/>
</dbReference>
<dbReference type="GO" id="GO:0005840">
    <property type="term" value="C:ribosome"/>
    <property type="evidence" value="ECO:0007669"/>
    <property type="project" value="UniProtKB-KW"/>
</dbReference>
<dbReference type="GO" id="GO:0019843">
    <property type="term" value="F:rRNA binding"/>
    <property type="evidence" value="ECO:0007669"/>
    <property type="project" value="UniProtKB-UniRule"/>
</dbReference>
<dbReference type="GO" id="GO:0003735">
    <property type="term" value="F:structural constituent of ribosome"/>
    <property type="evidence" value="ECO:0007669"/>
    <property type="project" value="InterPro"/>
</dbReference>
<dbReference type="GO" id="GO:0000027">
    <property type="term" value="P:ribosomal large subunit assembly"/>
    <property type="evidence" value="ECO:0007669"/>
    <property type="project" value="UniProtKB-UniRule"/>
</dbReference>
<dbReference type="GO" id="GO:0006412">
    <property type="term" value="P:translation"/>
    <property type="evidence" value="ECO:0007669"/>
    <property type="project" value="InterPro"/>
</dbReference>
<dbReference type="CDD" id="cd07026">
    <property type="entry name" value="Ribosomal_L20"/>
    <property type="match status" value="1"/>
</dbReference>
<dbReference type="FunFam" id="1.10.1900.20:FF:000001">
    <property type="entry name" value="50S ribosomal protein L20"/>
    <property type="match status" value="1"/>
</dbReference>
<dbReference type="Gene3D" id="6.10.160.10">
    <property type="match status" value="1"/>
</dbReference>
<dbReference type="Gene3D" id="1.10.1900.20">
    <property type="entry name" value="Ribosomal protein L20"/>
    <property type="match status" value="1"/>
</dbReference>
<dbReference type="HAMAP" id="MF_00382">
    <property type="entry name" value="Ribosomal_bL20"/>
    <property type="match status" value="1"/>
</dbReference>
<dbReference type="InterPro" id="IPR005813">
    <property type="entry name" value="Ribosomal_bL20"/>
</dbReference>
<dbReference type="InterPro" id="IPR049946">
    <property type="entry name" value="RIBOSOMAL_L20_CS"/>
</dbReference>
<dbReference type="InterPro" id="IPR035566">
    <property type="entry name" value="Ribosomal_protein_bL20_C"/>
</dbReference>
<dbReference type="NCBIfam" id="TIGR01032">
    <property type="entry name" value="rplT_bact"/>
    <property type="match status" value="1"/>
</dbReference>
<dbReference type="PANTHER" id="PTHR10986">
    <property type="entry name" value="39S RIBOSOMAL PROTEIN L20"/>
    <property type="match status" value="1"/>
</dbReference>
<dbReference type="Pfam" id="PF00453">
    <property type="entry name" value="Ribosomal_L20"/>
    <property type="match status" value="1"/>
</dbReference>
<dbReference type="PRINTS" id="PR00062">
    <property type="entry name" value="RIBOSOMALL20"/>
</dbReference>
<dbReference type="SUPFAM" id="SSF74731">
    <property type="entry name" value="Ribosomal protein L20"/>
    <property type="match status" value="1"/>
</dbReference>
<dbReference type="PROSITE" id="PS00937">
    <property type="entry name" value="RIBOSOMAL_L20"/>
    <property type="match status" value="1"/>
</dbReference>
<evidence type="ECO:0000255" key="1">
    <source>
        <dbReference type="HAMAP-Rule" id="MF_00382"/>
    </source>
</evidence>
<evidence type="ECO:0000305" key="2"/>
<reference key="1">
    <citation type="journal article" date="2008" name="Chem. Biol. Interact.">
        <title>Extending the Bacillus cereus group genomics to putative food-borne pathogens of different toxicity.</title>
        <authorList>
            <person name="Lapidus A."/>
            <person name="Goltsman E."/>
            <person name="Auger S."/>
            <person name="Galleron N."/>
            <person name="Segurens B."/>
            <person name="Dossat C."/>
            <person name="Land M.L."/>
            <person name="Broussolle V."/>
            <person name="Brillard J."/>
            <person name="Guinebretiere M.-H."/>
            <person name="Sanchis V."/>
            <person name="Nguen-the C."/>
            <person name="Lereclus D."/>
            <person name="Richardson P."/>
            <person name="Wincker P."/>
            <person name="Weissenbach J."/>
            <person name="Ehrlich S.D."/>
            <person name="Sorokin A."/>
        </authorList>
    </citation>
    <scope>NUCLEOTIDE SEQUENCE [LARGE SCALE GENOMIC DNA]</scope>
    <source>
        <strain>DSM 22905 / CIP 110041 / 391-98 / NVH 391-98</strain>
    </source>
</reference>